<protein>
    <recommendedName>
        <fullName evidence="1">Indole-3-glycerol phosphate synthase</fullName>
        <shortName evidence="1">IGPS</shortName>
        <ecNumber evidence="1">4.1.1.48</ecNumber>
    </recommendedName>
</protein>
<sequence length="261" mass="29500">MILDEIIKRTKEDLKKRKSDYPAQWLGRSLAYNPYVPRDVASALSSSAKEPLRIIAEVKKASPSKGVIRENFEPIRIAKEYEDAGANAISVLTEPHWFKGDIEYITQIRRYTATPLLRKDFIVDEYQILEALVYGADFILLIAKALSSKELKGLLAYAHHLGLEVLVETHDAQDVKKAIFAGANIIGINHRNLDDFSMDMSLCERLIPLLPNGKIIVAESGLYEHEQLKELNRIGVDAFLIGEHFMRQEDIKTAVKNIKEG</sequence>
<gene>
    <name evidence="1" type="primary">trpC</name>
    <name type="ordered locus">Ccur92_10450</name>
    <name type="ORF">CCV52592_1952</name>
</gene>
<dbReference type="EC" id="4.1.1.48" evidence="1"/>
<dbReference type="EMBL" id="CP000767">
    <property type="protein sequence ID" value="EAU00525.1"/>
    <property type="molecule type" value="Genomic_DNA"/>
</dbReference>
<dbReference type="RefSeq" id="WP_009651501.1">
    <property type="nucleotide sequence ID" value="NC_009715.2"/>
</dbReference>
<dbReference type="SMR" id="A7GYQ7"/>
<dbReference type="STRING" id="360105.CCV52592_1952"/>
<dbReference type="KEGG" id="ccv:CCV52592_1952"/>
<dbReference type="HOGENOM" id="CLU_034247_2_0_7"/>
<dbReference type="OrthoDB" id="9804217at2"/>
<dbReference type="UniPathway" id="UPA00035">
    <property type="reaction ID" value="UER00043"/>
</dbReference>
<dbReference type="Proteomes" id="UP000006380">
    <property type="component" value="Chromosome"/>
</dbReference>
<dbReference type="GO" id="GO:0004425">
    <property type="term" value="F:indole-3-glycerol-phosphate synthase activity"/>
    <property type="evidence" value="ECO:0007669"/>
    <property type="project" value="UniProtKB-UniRule"/>
</dbReference>
<dbReference type="GO" id="GO:0004640">
    <property type="term" value="F:phosphoribosylanthranilate isomerase activity"/>
    <property type="evidence" value="ECO:0007669"/>
    <property type="project" value="TreeGrafter"/>
</dbReference>
<dbReference type="GO" id="GO:0000162">
    <property type="term" value="P:L-tryptophan biosynthetic process"/>
    <property type="evidence" value="ECO:0007669"/>
    <property type="project" value="UniProtKB-UniRule"/>
</dbReference>
<dbReference type="CDD" id="cd00331">
    <property type="entry name" value="IGPS"/>
    <property type="match status" value="1"/>
</dbReference>
<dbReference type="FunFam" id="3.20.20.70:FF:000024">
    <property type="entry name" value="Indole-3-glycerol phosphate synthase"/>
    <property type="match status" value="1"/>
</dbReference>
<dbReference type="Gene3D" id="3.20.20.70">
    <property type="entry name" value="Aldolase class I"/>
    <property type="match status" value="1"/>
</dbReference>
<dbReference type="HAMAP" id="MF_00134_B">
    <property type="entry name" value="IGPS_B"/>
    <property type="match status" value="1"/>
</dbReference>
<dbReference type="InterPro" id="IPR013785">
    <property type="entry name" value="Aldolase_TIM"/>
</dbReference>
<dbReference type="InterPro" id="IPR045186">
    <property type="entry name" value="Indole-3-glycerol_P_synth"/>
</dbReference>
<dbReference type="InterPro" id="IPR013798">
    <property type="entry name" value="Indole-3-glycerol_P_synth_dom"/>
</dbReference>
<dbReference type="InterPro" id="IPR001468">
    <property type="entry name" value="Indole-3-GlycerolPSynthase_CS"/>
</dbReference>
<dbReference type="InterPro" id="IPR011060">
    <property type="entry name" value="RibuloseP-bd_barrel"/>
</dbReference>
<dbReference type="NCBIfam" id="NF001377">
    <property type="entry name" value="PRK00278.2-4"/>
    <property type="match status" value="1"/>
</dbReference>
<dbReference type="NCBIfam" id="NF001378">
    <property type="entry name" value="PRK00278.2-5"/>
    <property type="match status" value="1"/>
</dbReference>
<dbReference type="PANTHER" id="PTHR22854:SF2">
    <property type="entry name" value="INDOLE-3-GLYCEROL-PHOSPHATE SYNTHASE"/>
    <property type="match status" value="1"/>
</dbReference>
<dbReference type="PANTHER" id="PTHR22854">
    <property type="entry name" value="TRYPTOPHAN BIOSYNTHESIS PROTEIN"/>
    <property type="match status" value="1"/>
</dbReference>
<dbReference type="Pfam" id="PF00218">
    <property type="entry name" value="IGPS"/>
    <property type="match status" value="1"/>
</dbReference>
<dbReference type="SUPFAM" id="SSF51366">
    <property type="entry name" value="Ribulose-phoshate binding barrel"/>
    <property type="match status" value="1"/>
</dbReference>
<dbReference type="PROSITE" id="PS00614">
    <property type="entry name" value="IGPS"/>
    <property type="match status" value="1"/>
</dbReference>
<proteinExistence type="inferred from homology"/>
<organism>
    <name type="scientific">Campylobacter curvus (strain 525.92)</name>
    <dbReference type="NCBI Taxonomy" id="360105"/>
    <lineage>
        <taxon>Bacteria</taxon>
        <taxon>Pseudomonadati</taxon>
        <taxon>Campylobacterota</taxon>
        <taxon>Epsilonproteobacteria</taxon>
        <taxon>Campylobacterales</taxon>
        <taxon>Campylobacteraceae</taxon>
        <taxon>Campylobacter</taxon>
    </lineage>
</organism>
<evidence type="ECO:0000255" key="1">
    <source>
        <dbReference type="HAMAP-Rule" id="MF_00134"/>
    </source>
</evidence>
<accession>A7GYQ7</accession>
<comment type="catalytic activity">
    <reaction evidence="1">
        <text>1-(2-carboxyphenylamino)-1-deoxy-D-ribulose 5-phosphate + H(+) = (1S,2R)-1-C-(indol-3-yl)glycerol 3-phosphate + CO2 + H2O</text>
        <dbReference type="Rhea" id="RHEA:23476"/>
        <dbReference type="ChEBI" id="CHEBI:15377"/>
        <dbReference type="ChEBI" id="CHEBI:15378"/>
        <dbReference type="ChEBI" id="CHEBI:16526"/>
        <dbReference type="ChEBI" id="CHEBI:58613"/>
        <dbReference type="ChEBI" id="CHEBI:58866"/>
        <dbReference type="EC" id="4.1.1.48"/>
    </reaction>
</comment>
<comment type="pathway">
    <text evidence="1">Amino-acid biosynthesis; L-tryptophan biosynthesis; L-tryptophan from chorismate: step 4/5.</text>
</comment>
<comment type="similarity">
    <text evidence="1">Belongs to the TrpC family.</text>
</comment>
<name>TRPC_CAMC5</name>
<feature type="chain" id="PRO_1000018466" description="Indole-3-glycerol phosphate synthase">
    <location>
        <begin position="1"/>
        <end position="261"/>
    </location>
</feature>
<keyword id="KW-0028">Amino-acid biosynthesis</keyword>
<keyword id="KW-0057">Aromatic amino acid biosynthesis</keyword>
<keyword id="KW-0210">Decarboxylase</keyword>
<keyword id="KW-0456">Lyase</keyword>
<keyword id="KW-1185">Reference proteome</keyword>
<keyword id="KW-0822">Tryptophan biosynthesis</keyword>
<reference key="1">
    <citation type="submission" date="2007-07" db="EMBL/GenBank/DDBJ databases">
        <title>Genome sequence of Campylobacter curvus 525.92 isolated from human feces.</title>
        <authorList>
            <person name="Fouts D.E."/>
            <person name="Mongodin E.F."/>
            <person name="Puiu D."/>
            <person name="Sebastian Y."/>
            <person name="Miller W.G."/>
            <person name="Mandrell R.E."/>
            <person name="Lastovica A.J."/>
            <person name="Nelson K.E."/>
        </authorList>
    </citation>
    <scope>NUCLEOTIDE SEQUENCE [LARGE SCALE GENOMIC DNA]</scope>
    <source>
        <strain>525.92</strain>
    </source>
</reference>